<organism>
    <name type="scientific">Streptococcus pneumoniae (strain 70585)</name>
    <dbReference type="NCBI Taxonomy" id="488221"/>
    <lineage>
        <taxon>Bacteria</taxon>
        <taxon>Bacillati</taxon>
        <taxon>Bacillota</taxon>
        <taxon>Bacilli</taxon>
        <taxon>Lactobacillales</taxon>
        <taxon>Streptococcaceae</taxon>
        <taxon>Streptococcus</taxon>
    </lineage>
</organism>
<sequence>MNLKDYIATIENYPKEGITFRDISPLMADGNAYSYAVREIVQYATDKKVDMIVGPEARGFIVGCPVAFELGIGFAPVRKPGKLPREVISADYEKEYGVDTLTMHADAIKPGQRVLIVDDLLATGGTVKATIEMIEKLGGVMAGCAFLVELDELNGREKIGDYDYKVLMHY</sequence>
<comment type="function">
    <text evidence="1">Catalyzes a salvage reaction resulting in the formation of AMP, that is energically less costly than de novo synthesis.</text>
</comment>
<comment type="catalytic activity">
    <reaction evidence="1">
        <text>AMP + diphosphate = 5-phospho-alpha-D-ribose 1-diphosphate + adenine</text>
        <dbReference type="Rhea" id="RHEA:16609"/>
        <dbReference type="ChEBI" id="CHEBI:16708"/>
        <dbReference type="ChEBI" id="CHEBI:33019"/>
        <dbReference type="ChEBI" id="CHEBI:58017"/>
        <dbReference type="ChEBI" id="CHEBI:456215"/>
        <dbReference type="EC" id="2.4.2.7"/>
    </reaction>
</comment>
<comment type="pathway">
    <text evidence="1">Purine metabolism; AMP biosynthesis via salvage pathway; AMP from adenine: step 1/1.</text>
</comment>
<comment type="subunit">
    <text evidence="1">Homodimer.</text>
</comment>
<comment type="subcellular location">
    <subcellularLocation>
        <location evidence="1">Cytoplasm</location>
    </subcellularLocation>
</comment>
<comment type="similarity">
    <text evidence="1">Belongs to the purine/pyrimidine phosphoribosyltransferase family.</text>
</comment>
<accession>C1C8G8</accession>
<reference key="1">
    <citation type="journal article" date="2010" name="Genome Biol.">
        <title>Structure and dynamics of the pan-genome of Streptococcus pneumoniae and closely related species.</title>
        <authorList>
            <person name="Donati C."/>
            <person name="Hiller N.L."/>
            <person name="Tettelin H."/>
            <person name="Muzzi A."/>
            <person name="Croucher N.J."/>
            <person name="Angiuoli S.V."/>
            <person name="Oggioni M."/>
            <person name="Dunning Hotopp J.C."/>
            <person name="Hu F.Z."/>
            <person name="Riley D.R."/>
            <person name="Covacci A."/>
            <person name="Mitchell T.J."/>
            <person name="Bentley S.D."/>
            <person name="Kilian M."/>
            <person name="Ehrlich G.D."/>
            <person name="Rappuoli R."/>
            <person name="Moxon E.R."/>
            <person name="Masignani V."/>
        </authorList>
    </citation>
    <scope>NUCLEOTIDE SEQUENCE [LARGE SCALE GENOMIC DNA]</scope>
    <source>
        <strain>70585</strain>
    </source>
</reference>
<dbReference type="EC" id="2.4.2.7" evidence="1"/>
<dbReference type="EMBL" id="CP000918">
    <property type="protein sequence ID" value="ACO17017.1"/>
    <property type="molecule type" value="Genomic_DNA"/>
</dbReference>
<dbReference type="RefSeq" id="WP_001049323.1">
    <property type="nucleotide sequence ID" value="NC_012468.1"/>
</dbReference>
<dbReference type="SMR" id="C1C8G8"/>
<dbReference type="KEGG" id="snm:SP70585_1618"/>
<dbReference type="HOGENOM" id="CLU_063339_3_0_9"/>
<dbReference type="UniPathway" id="UPA00588">
    <property type="reaction ID" value="UER00646"/>
</dbReference>
<dbReference type="Proteomes" id="UP000002211">
    <property type="component" value="Chromosome"/>
</dbReference>
<dbReference type="GO" id="GO:0005737">
    <property type="term" value="C:cytoplasm"/>
    <property type="evidence" value="ECO:0007669"/>
    <property type="project" value="UniProtKB-SubCell"/>
</dbReference>
<dbReference type="GO" id="GO:0002055">
    <property type="term" value="F:adenine binding"/>
    <property type="evidence" value="ECO:0007669"/>
    <property type="project" value="TreeGrafter"/>
</dbReference>
<dbReference type="GO" id="GO:0003999">
    <property type="term" value="F:adenine phosphoribosyltransferase activity"/>
    <property type="evidence" value="ECO:0007669"/>
    <property type="project" value="UniProtKB-UniRule"/>
</dbReference>
<dbReference type="GO" id="GO:0016208">
    <property type="term" value="F:AMP binding"/>
    <property type="evidence" value="ECO:0007669"/>
    <property type="project" value="TreeGrafter"/>
</dbReference>
<dbReference type="GO" id="GO:0006168">
    <property type="term" value="P:adenine salvage"/>
    <property type="evidence" value="ECO:0007669"/>
    <property type="project" value="InterPro"/>
</dbReference>
<dbReference type="GO" id="GO:0044209">
    <property type="term" value="P:AMP salvage"/>
    <property type="evidence" value="ECO:0007669"/>
    <property type="project" value="UniProtKB-UniRule"/>
</dbReference>
<dbReference type="GO" id="GO:0006166">
    <property type="term" value="P:purine ribonucleoside salvage"/>
    <property type="evidence" value="ECO:0007669"/>
    <property type="project" value="UniProtKB-KW"/>
</dbReference>
<dbReference type="CDD" id="cd06223">
    <property type="entry name" value="PRTases_typeI"/>
    <property type="match status" value="1"/>
</dbReference>
<dbReference type="FunFam" id="3.40.50.2020:FF:000004">
    <property type="entry name" value="Adenine phosphoribosyltransferase"/>
    <property type="match status" value="1"/>
</dbReference>
<dbReference type="Gene3D" id="3.40.50.2020">
    <property type="match status" value="1"/>
</dbReference>
<dbReference type="HAMAP" id="MF_00004">
    <property type="entry name" value="Aden_phosphoribosyltr"/>
    <property type="match status" value="1"/>
</dbReference>
<dbReference type="InterPro" id="IPR005764">
    <property type="entry name" value="Ade_phspho_trans"/>
</dbReference>
<dbReference type="InterPro" id="IPR000836">
    <property type="entry name" value="PRibTrfase_dom"/>
</dbReference>
<dbReference type="InterPro" id="IPR029057">
    <property type="entry name" value="PRTase-like"/>
</dbReference>
<dbReference type="InterPro" id="IPR050054">
    <property type="entry name" value="UPRTase/APRTase"/>
</dbReference>
<dbReference type="NCBIfam" id="TIGR01090">
    <property type="entry name" value="apt"/>
    <property type="match status" value="1"/>
</dbReference>
<dbReference type="NCBIfam" id="NF002633">
    <property type="entry name" value="PRK02304.1-2"/>
    <property type="match status" value="1"/>
</dbReference>
<dbReference type="NCBIfam" id="NF002634">
    <property type="entry name" value="PRK02304.1-3"/>
    <property type="match status" value="1"/>
</dbReference>
<dbReference type="NCBIfam" id="NF002636">
    <property type="entry name" value="PRK02304.1-5"/>
    <property type="match status" value="1"/>
</dbReference>
<dbReference type="PANTHER" id="PTHR32315">
    <property type="entry name" value="ADENINE PHOSPHORIBOSYLTRANSFERASE"/>
    <property type="match status" value="1"/>
</dbReference>
<dbReference type="PANTHER" id="PTHR32315:SF3">
    <property type="entry name" value="ADENINE PHOSPHORIBOSYLTRANSFERASE"/>
    <property type="match status" value="1"/>
</dbReference>
<dbReference type="Pfam" id="PF00156">
    <property type="entry name" value="Pribosyltran"/>
    <property type="match status" value="1"/>
</dbReference>
<dbReference type="SUPFAM" id="SSF53271">
    <property type="entry name" value="PRTase-like"/>
    <property type="match status" value="1"/>
</dbReference>
<dbReference type="PROSITE" id="PS00103">
    <property type="entry name" value="PUR_PYR_PR_TRANSFER"/>
    <property type="match status" value="1"/>
</dbReference>
<protein>
    <recommendedName>
        <fullName evidence="1">Adenine phosphoribosyltransferase</fullName>
        <shortName evidence="1">APRT</shortName>
        <ecNumber evidence="1">2.4.2.7</ecNumber>
    </recommendedName>
</protein>
<keyword id="KW-0963">Cytoplasm</keyword>
<keyword id="KW-0328">Glycosyltransferase</keyword>
<keyword id="KW-0660">Purine salvage</keyword>
<keyword id="KW-0808">Transferase</keyword>
<proteinExistence type="inferred from homology"/>
<gene>
    <name evidence="1" type="primary">apt</name>
    <name type="ordered locus">SP70585_1618</name>
</gene>
<evidence type="ECO:0000255" key="1">
    <source>
        <dbReference type="HAMAP-Rule" id="MF_00004"/>
    </source>
</evidence>
<name>APT_STRP7</name>
<feature type="chain" id="PRO_1000116258" description="Adenine phosphoribosyltransferase">
    <location>
        <begin position="1"/>
        <end position="170"/>
    </location>
</feature>